<gene>
    <name type="ORF">FV3-055R</name>
</gene>
<keyword id="KW-1185">Reference proteome</keyword>
<evidence type="ECO:0000256" key="1">
    <source>
        <dbReference type="SAM" id="MobiDB-lite"/>
    </source>
</evidence>
<protein>
    <recommendedName>
        <fullName>Uncharacterized protein 055R</fullName>
    </recommendedName>
</protein>
<organismHost>
    <name type="scientific">Dryophytes versicolor</name>
    <name type="common">chameleon treefrog</name>
    <dbReference type="NCBI Taxonomy" id="30343"/>
</organismHost>
<organismHost>
    <name type="scientific">Lithobates pipiens</name>
    <name type="common">Northern leopard frog</name>
    <name type="synonym">Rana pipiens</name>
    <dbReference type="NCBI Taxonomy" id="8404"/>
</organismHost>
<organismHost>
    <name type="scientific">Lithobates sylvaticus</name>
    <name type="common">Wood frog</name>
    <name type="synonym">Rana sylvatica</name>
    <dbReference type="NCBI Taxonomy" id="45438"/>
</organismHost>
<organismHost>
    <name type="scientific">Notophthalmus viridescens</name>
    <name type="common">Eastern newt</name>
    <name type="synonym">Triturus viridescens</name>
    <dbReference type="NCBI Taxonomy" id="8316"/>
</organismHost>
<name>055R_FRG3G</name>
<proteinExistence type="predicted"/>
<sequence>MLPQNSQVVHGVQDGPPVGPQPAQALLKVPVDVRRQAQAGPLAGVEPRPRLGVGAHHTPGVPVPLILGAVQHVHLLPGPRGQCLGHPLDVVHPLAQHQPLYVGPEEHPVGQGGVPLGVIGLGLDHRVPVHLARDLAKLGLYVHARAEYLHLVGPGVDPVHRAVLPAEKGPQCSVVVVVPHGCSAQTQQVRGPHRQEDPTRHGGRQLVGLIHNQEKFCGRVLGLDPPVSQRSRTRHIQVPGQGVGRRGAGCKDPRVRKEPGRRVPPLSRQHPPVCQDEGGQPQPPPQLQGHEGLAEAGRALEHAVPLGGDVAPGLLQDPFLVRSERDGAPLPGCAVSGRRFASQDPGTPGEGDVGLSPGREGKQVRFPRAGHVSIYRVEP</sequence>
<organism>
    <name type="scientific">Frog virus 3 (isolate Goorha)</name>
    <name type="common">FV-3</name>
    <dbReference type="NCBI Taxonomy" id="654924"/>
    <lineage>
        <taxon>Viruses</taxon>
        <taxon>Varidnaviria</taxon>
        <taxon>Bamfordvirae</taxon>
        <taxon>Nucleocytoviricota</taxon>
        <taxon>Megaviricetes</taxon>
        <taxon>Pimascovirales</taxon>
        <taxon>Iridoviridae</taxon>
        <taxon>Alphairidovirinae</taxon>
        <taxon>Ranavirus</taxon>
        <taxon>Frog virus 3</taxon>
    </lineage>
</organism>
<feature type="chain" id="PRO_0000410506" description="Uncharacterized protein 055R">
    <location>
        <begin position="1"/>
        <end position="379"/>
    </location>
</feature>
<feature type="region of interest" description="Disordered" evidence="1">
    <location>
        <begin position="1"/>
        <end position="20"/>
    </location>
</feature>
<feature type="region of interest" description="Disordered" evidence="1">
    <location>
        <begin position="227"/>
        <end position="290"/>
    </location>
</feature>
<feature type="region of interest" description="Disordered" evidence="1">
    <location>
        <begin position="331"/>
        <end position="371"/>
    </location>
</feature>
<feature type="compositionally biased region" description="Low complexity" evidence="1">
    <location>
        <begin position="7"/>
        <end position="20"/>
    </location>
</feature>
<feature type="compositionally biased region" description="Basic and acidic residues" evidence="1">
    <location>
        <begin position="249"/>
        <end position="261"/>
    </location>
</feature>
<accession>Q67475</accession>
<reference key="1">
    <citation type="journal article" date="2004" name="Virology">
        <title>Comparative genomic analyses of frog virus 3, type species of the genus Ranavirus (family Iridoviridae).</title>
        <authorList>
            <person name="Tan W.G."/>
            <person name="Barkman T.J."/>
            <person name="Gregory Chinchar V."/>
            <person name="Essani K."/>
        </authorList>
    </citation>
    <scope>NUCLEOTIDE SEQUENCE [LARGE SCALE GENOMIC DNA]</scope>
</reference>
<dbReference type="EMBL" id="AY548484">
    <property type="protein sequence ID" value="AAT09715.1"/>
    <property type="molecule type" value="Genomic_DNA"/>
</dbReference>
<dbReference type="EMBL" id="X82828">
    <property type="protein sequence ID" value="CAA58035.1"/>
    <property type="molecule type" value="Genomic_DNA"/>
</dbReference>
<dbReference type="PIR" id="S49999">
    <property type="entry name" value="S49999"/>
</dbReference>
<dbReference type="RefSeq" id="YP_031634.1">
    <property type="nucleotide sequence ID" value="NC_005946.1"/>
</dbReference>
<dbReference type="KEGG" id="vg:2947755"/>
<dbReference type="Proteomes" id="UP000008770">
    <property type="component" value="Segment"/>
</dbReference>